<proteinExistence type="inferred from homology"/>
<evidence type="ECO:0000250" key="1"/>
<evidence type="ECO:0000305" key="2"/>
<geneLocation type="chloroplast"/>
<feature type="chain" id="PRO_0000277431" description="Ribulose bisphosphate carboxylase large chain">
    <location>
        <begin position="1"/>
        <end position="488"/>
    </location>
</feature>
<feature type="active site" description="Proton acceptor" evidence="1">
    <location>
        <position position="179"/>
    </location>
</feature>
<feature type="active site" description="Proton acceptor" evidence="1">
    <location>
        <position position="297"/>
    </location>
</feature>
<feature type="binding site" description="in homodimeric partner" evidence="1">
    <location>
        <position position="127"/>
    </location>
    <ligand>
        <name>substrate</name>
    </ligand>
</feature>
<feature type="binding site" evidence="1">
    <location>
        <position position="177"/>
    </location>
    <ligand>
        <name>substrate</name>
    </ligand>
</feature>
<feature type="binding site" evidence="1">
    <location>
        <position position="181"/>
    </location>
    <ligand>
        <name>substrate</name>
    </ligand>
</feature>
<feature type="binding site" description="via carbamate group" evidence="1">
    <location>
        <position position="205"/>
    </location>
    <ligand>
        <name>Mg(2+)</name>
        <dbReference type="ChEBI" id="CHEBI:18420"/>
    </ligand>
</feature>
<feature type="binding site" evidence="1">
    <location>
        <position position="207"/>
    </location>
    <ligand>
        <name>Mg(2+)</name>
        <dbReference type="ChEBI" id="CHEBI:18420"/>
    </ligand>
</feature>
<feature type="binding site" evidence="1">
    <location>
        <position position="208"/>
    </location>
    <ligand>
        <name>Mg(2+)</name>
        <dbReference type="ChEBI" id="CHEBI:18420"/>
    </ligand>
</feature>
<feature type="binding site" evidence="1">
    <location>
        <position position="298"/>
    </location>
    <ligand>
        <name>substrate</name>
    </ligand>
</feature>
<feature type="binding site" evidence="1">
    <location>
        <position position="330"/>
    </location>
    <ligand>
        <name>substrate</name>
    </ligand>
</feature>
<feature type="binding site" evidence="1">
    <location>
        <position position="382"/>
    </location>
    <ligand>
        <name>substrate</name>
    </ligand>
</feature>
<feature type="site" description="Transition state stabilizer" evidence="1">
    <location>
        <position position="337"/>
    </location>
</feature>
<feature type="modified residue" description="N6-carboxylysine" evidence="1">
    <location>
        <position position="205"/>
    </location>
</feature>
<sequence length="488" mass="53966">MSQSVESRTRIKSERYESGVIPYAKMGYWDADYVIKDTDVLALFRITPQPGVDPIEASAAIAGESSTATWTVVWTDLLTACDLYRAKAYRVDPVPNVADQYFAYIAYDIDLFEEGSIANLTASIIGNVFGFKAVKALRLEDMRMPVAYLKTFQGPATGLIVERERMDKFGRPFLGATVKPKLGLSGKNYGRVVYEGLKGGLDFLKDDENINSQPFMRWRERYLYSMEGVNKASAAAGELKGHYLNVTAATMEDMYERAEFSKVVGSVICMIDLVIGYTAIQSMAIWARKNDMILHLHRAGNSTYSRQKNHGMNFRVICKWMRMAGVDHIHAGTVVGKLEGDPLMIKGFYNTLLESETDINLPQGLFFAQNWASLRKVVPVASGGIHAGQMHQLLDYLGDDVVLQFGGGTIGHPDGIQAGATANRVALESMVMARNEGRDYVAEGPQILRDAAKTCGPLQTALDLWKDISFNYTSTDTADFVETPTANV</sequence>
<dbReference type="EC" id="4.1.1.39"/>
<dbReference type="EMBL" id="AB118584">
    <property type="protein sequence ID" value="BAC84935.1"/>
    <property type="molecule type" value="Genomic_DNA"/>
</dbReference>
<dbReference type="RefSeq" id="YP_009413239.1">
    <property type="nucleotide sequence ID" value="NC_035573.1"/>
</dbReference>
<dbReference type="SMR" id="Q760R7"/>
<dbReference type="GeneID" id="33873503"/>
<dbReference type="OrthoDB" id="1578724at2759"/>
<dbReference type="GO" id="GO:0009507">
    <property type="term" value="C:chloroplast"/>
    <property type="evidence" value="ECO:0007669"/>
    <property type="project" value="UniProtKB-SubCell"/>
</dbReference>
<dbReference type="GO" id="GO:0000287">
    <property type="term" value="F:magnesium ion binding"/>
    <property type="evidence" value="ECO:0007669"/>
    <property type="project" value="UniProtKB-UniRule"/>
</dbReference>
<dbReference type="GO" id="GO:0004497">
    <property type="term" value="F:monooxygenase activity"/>
    <property type="evidence" value="ECO:0007669"/>
    <property type="project" value="UniProtKB-KW"/>
</dbReference>
<dbReference type="GO" id="GO:0016984">
    <property type="term" value="F:ribulose-bisphosphate carboxylase activity"/>
    <property type="evidence" value="ECO:0007669"/>
    <property type="project" value="UniProtKB-UniRule"/>
</dbReference>
<dbReference type="GO" id="GO:0019253">
    <property type="term" value="P:reductive pentose-phosphate cycle"/>
    <property type="evidence" value="ECO:0007669"/>
    <property type="project" value="UniProtKB-UniRule"/>
</dbReference>
<dbReference type="CDD" id="cd08212">
    <property type="entry name" value="RuBisCO_large_I"/>
    <property type="match status" value="1"/>
</dbReference>
<dbReference type="Gene3D" id="3.20.20.110">
    <property type="entry name" value="Ribulose bisphosphate carboxylase, large subunit, C-terminal domain"/>
    <property type="match status" value="1"/>
</dbReference>
<dbReference type="Gene3D" id="3.30.70.150">
    <property type="entry name" value="RuBisCO large subunit, N-terminal domain"/>
    <property type="match status" value="1"/>
</dbReference>
<dbReference type="HAMAP" id="MF_01338">
    <property type="entry name" value="RuBisCO_L_type1"/>
    <property type="match status" value="1"/>
</dbReference>
<dbReference type="InterPro" id="IPR033966">
    <property type="entry name" value="RuBisCO"/>
</dbReference>
<dbReference type="InterPro" id="IPR020878">
    <property type="entry name" value="RuBisCo_large_chain_AS"/>
</dbReference>
<dbReference type="InterPro" id="IPR000685">
    <property type="entry name" value="RuBisCO_lsu_C"/>
</dbReference>
<dbReference type="InterPro" id="IPR036376">
    <property type="entry name" value="RuBisCO_lsu_C_sf"/>
</dbReference>
<dbReference type="InterPro" id="IPR017443">
    <property type="entry name" value="RuBisCO_lsu_fd_N"/>
</dbReference>
<dbReference type="InterPro" id="IPR036422">
    <property type="entry name" value="RuBisCO_lsu_N_sf"/>
</dbReference>
<dbReference type="InterPro" id="IPR020888">
    <property type="entry name" value="RuBisCO_lsuI"/>
</dbReference>
<dbReference type="NCBIfam" id="NF003252">
    <property type="entry name" value="PRK04208.1"/>
    <property type="match status" value="1"/>
</dbReference>
<dbReference type="PANTHER" id="PTHR42704">
    <property type="entry name" value="RIBULOSE BISPHOSPHATE CARBOXYLASE"/>
    <property type="match status" value="1"/>
</dbReference>
<dbReference type="PANTHER" id="PTHR42704:SF17">
    <property type="entry name" value="RIBULOSE BISPHOSPHATE CARBOXYLASE LARGE CHAIN"/>
    <property type="match status" value="1"/>
</dbReference>
<dbReference type="Pfam" id="PF00016">
    <property type="entry name" value="RuBisCO_large"/>
    <property type="match status" value="1"/>
</dbReference>
<dbReference type="Pfam" id="PF02788">
    <property type="entry name" value="RuBisCO_large_N"/>
    <property type="match status" value="1"/>
</dbReference>
<dbReference type="SFLD" id="SFLDG01052">
    <property type="entry name" value="RuBisCO"/>
    <property type="match status" value="1"/>
</dbReference>
<dbReference type="SFLD" id="SFLDS00014">
    <property type="entry name" value="RuBisCO"/>
    <property type="match status" value="1"/>
</dbReference>
<dbReference type="SFLD" id="SFLDG00301">
    <property type="entry name" value="RuBisCO-like_proteins"/>
    <property type="match status" value="1"/>
</dbReference>
<dbReference type="SUPFAM" id="SSF51649">
    <property type="entry name" value="RuBisCo, C-terminal domain"/>
    <property type="match status" value="1"/>
</dbReference>
<dbReference type="SUPFAM" id="SSF54966">
    <property type="entry name" value="RuBisCO, large subunit, small (N-terminal) domain"/>
    <property type="match status" value="1"/>
</dbReference>
<dbReference type="PROSITE" id="PS00157">
    <property type="entry name" value="RUBISCO_LARGE"/>
    <property type="match status" value="1"/>
</dbReference>
<organism>
    <name type="scientific">Porphyra umbilicalis</name>
    <name type="common">Purple laver</name>
    <name type="synonym">Red alga</name>
    <dbReference type="NCBI Taxonomy" id="2786"/>
    <lineage>
        <taxon>Eukaryota</taxon>
        <taxon>Rhodophyta</taxon>
        <taxon>Bangiophyceae</taxon>
        <taxon>Bangiales</taxon>
        <taxon>Bangiaceae</taxon>
        <taxon>Porphyra</taxon>
    </lineage>
</organism>
<keyword id="KW-0113">Calvin cycle</keyword>
<keyword id="KW-0120">Carbon dioxide fixation</keyword>
<keyword id="KW-0150">Chloroplast</keyword>
<keyword id="KW-0456">Lyase</keyword>
<keyword id="KW-0460">Magnesium</keyword>
<keyword id="KW-0479">Metal-binding</keyword>
<keyword id="KW-0503">Monooxygenase</keyword>
<keyword id="KW-0560">Oxidoreductase</keyword>
<keyword id="KW-0601">Photorespiration</keyword>
<keyword id="KW-0602">Photosynthesis</keyword>
<keyword id="KW-0934">Plastid</keyword>
<name>RBL_PORUM</name>
<reference key="1">
    <citation type="submission" date="2003-08" db="EMBL/GenBank/DDBJ databases">
        <title>Species determination utilizing Porphyra (Rhodophyta) plastid DNA RuBisCo sequences.</title>
        <authorList>
            <person name="Kito H."/>
            <person name="Kunimoto M."/>
            <person name="Mizukami Y."/>
            <person name="Murase N."/>
            <person name="Kuroki T."/>
            <person name="Taruta M."/>
            <person name="Levine I."/>
        </authorList>
    </citation>
    <scope>NUCLEOTIDE SEQUENCE [GENOMIC DNA]</scope>
    <source>
        <tissue>Thallus</tissue>
    </source>
</reference>
<accession>Q760R7</accession>
<protein>
    <recommendedName>
        <fullName>Ribulose bisphosphate carboxylase large chain</fullName>
        <shortName>RuBisCO large subunit</shortName>
        <ecNumber>4.1.1.39</ecNumber>
    </recommendedName>
</protein>
<comment type="function">
    <text evidence="1">RuBisCO catalyzes two reactions: the carboxylation of D-ribulose 1,5-bisphosphate, the primary event in carbon dioxide fixation, as well as the oxidative fragmentation of the pentose substrate in the photorespiration process. Both reactions occur simultaneously and in competition at the same active site (By similarity).</text>
</comment>
<comment type="catalytic activity">
    <reaction>
        <text>2 (2R)-3-phosphoglycerate + 2 H(+) = D-ribulose 1,5-bisphosphate + CO2 + H2O</text>
        <dbReference type="Rhea" id="RHEA:23124"/>
        <dbReference type="ChEBI" id="CHEBI:15377"/>
        <dbReference type="ChEBI" id="CHEBI:15378"/>
        <dbReference type="ChEBI" id="CHEBI:16526"/>
        <dbReference type="ChEBI" id="CHEBI:57870"/>
        <dbReference type="ChEBI" id="CHEBI:58272"/>
        <dbReference type="EC" id="4.1.1.39"/>
    </reaction>
</comment>
<comment type="catalytic activity">
    <reaction>
        <text>D-ribulose 1,5-bisphosphate + O2 = 2-phosphoglycolate + (2R)-3-phosphoglycerate + 2 H(+)</text>
        <dbReference type="Rhea" id="RHEA:36631"/>
        <dbReference type="ChEBI" id="CHEBI:15378"/>
        <dbReference type="ChEBI" id="CHEBI:15379"/>
        <dbReference type="ChEBI" id="CHEBI:57870"/>
        <dbReference type="ChEBI" id="CHEBI:58033"/>
        <dbReference type="ChEBI" id="CHEBI:58272"/>
    </reaction>
</comment>
<comment type="cofactor">
    <cofactor evidence="1">
        <name>Mg(2+)</name>
        <dbReference type="ChEBI" id="CHEBI:18420"/>
    </cofactor>
    <text evidence="1">Binds 1 Mg(2+) ion per subunit.</text>
</comment>
<comment type="subunit">
    <text evidence="1">Heterohexadecamer of 8 large chains and 8 small chains.</text>
</comment>
<comment type="subcellular location">
    <subcellularLocation>
        <location>Plastid</location>
        <location>Chloroplast</location>
    </subcellularLocation>
</comment>
<comment type="miscellaneous">
    <text evidence="1">The basic functional RuBisCO is composed of a large chain homodimer in a 'head-to-tail' conformation. In form I RuBisCO this homodimer is arranged in a barrel-like tetramer with the small subunits forming a tetrameric 'cap' on each end of the 'barrel' (By similarity).</text>
</comment>
<comment type="similarity">
    <text evidence="2">Belongs to the RuBisCO large chain family. Type I subfamily.</text>
</comment>
<gene>
    <name type="primary">rbcL</name>
</gene>